<name>LOLA_LEGPL</name>
<feature type="signal peptide" evidence="1">
    <location>
        <begin position="1"/>
        <end position="18"/>
    </location>
</feature>
<feature type="chain" id="PRO_1000071832" description="Outer-membrane lipoprotein carrier protein">
    <location>
        <begin position="19"/>
        <end position="202"/>
    </location>
</feature>
<dbReference type="EMBL" id="CR628337">
    <property type="protein sequence ID" value="CAH15968.1"/>
    <property type="molecule type" value="Genomic_DNA"/>
</dbReference>
<dbReference type="RefSeq" id="WP_011215741.1">
    <property type="nucleotide sequence ID" value="NC_006369.1"/>
</dbReference>
<dbReference type="SMR" id="Q5WVT2"/>
<dbReference type="KEGG" id="lpf:lpl1729"/>
<dbReference type="LegioList" id="lpl1729"/>
<dbReference type="HOGENOM" id="CLU_087560_0_0_6"/>
<dbReference type="Proteomes" id="UP000002517">
    <property type="component" value="Chromosome"/>
</dbReference>
<dbReference type="GO" id="GO:0030288">
    <property type="term" value="C:outer membrane-bounded periplasmic space"/>
    <property type="evidence" value="ECO:0007669"/>
    <property type="project" value="TreeGrafter"/>
</dbReference>
<dbReference type="GO" id="GO:0044874">
    <property type="term" value="P:lipoprotein localization to outer membrane"/>
    <property type="evidence" value="ECO:0007669"/>
    <property type="project" value="UniProtKB-UniRule"/>
</dbReference>
<dbReference type="GO" id="GO:0042953">
    <property type="term" value="P:lipoprotein transport"/>
    <property type="evidence" value="ECO:0007669"/>
    <property type="project" value="InterPro"/>
</dbReference>
<dbReference type="CDD" id="cd16325">
    <property type="entry name" value="LolA"/>
    <property type="match status" value="1"/>
</dbReference>
<dbReference type="Gene3D" id="2.50.20.10">
    <property type="entry name" value="Lipoprotein localisation LolA/LolB/LppX"/>
    <property type="match status" value="1"/>
</dbReference>
<dbReference type="HAMAP" id="MF_00240">
    <property type="entry name" value="LolA"/>
    <property type="match status" value="1"/>
</dbReference>
<dbReference type="InterPro" id="IPR029046">
    <property type="entry name" value="LolA/LolB/LppX"/>
</dbReference>
<dbReference type="InterPro" id="IPR004564">
    <property type="entry name" value="OM_lipoprot_carrier_LolA-like"/>
</dbReference>
<dbReference type="InterPro" id="IPR018323">
    <property type="entry name" value="OM_lipoprot_carrier_LolA_Pbac"/>
</dbReference>
<dbReference type="NCBIfam" id="TIGR00547">
    <property type="entry name" value="lolA"/>
    <property type="match status" value="1"/>
</dbReference>
<dbReference type="PANTHER" id="PTHR35869">
    <property type="entry name" value="OUTER-MEMBRANE LIPOPROTEIN CARRIER PROTEIN"/>
    <property type="match status" value="1"/>
</dbReference>
<dbReference type="PANTHER" id="PTHR35869:SF1">
    <property type="entry name" value="OUTER-MEMBRANE LIPOPROTEIN CARRIER PROTEIN"/>
    <property type="match status" value="1"/>
</dbReference>
<dbReference type="Pfam" id="PF03548">
    <property type="entry name" value="LolA"/>
    <property type="match status" value="1"/>
</dbReference>
<dbReference type="SUPFAM" id="SSF89392">
    <property type="entry name" value="Prokaryotic lipoproteins and lipoprotein localization factors"/>
    <property type="match status" value="1"/>
</dbReference>
<proteinExistence type="inferred from homology"/>
<gene>
    <name evidence="1" type="primary">lolA</name>
    <name type="ordered locus">lpl1729</name>
</gene>
<evidence type="ECO:0000255" key="1">
    <source>
        <dbReference type="HAMAP-Rule" id="MF_00240"/>
    </source>
</evidence>
<organism>
    <name type="scientific">Legionella pneumophila (strain Lens)</name>
    <dbReference type="NCBI Taxonomy" id="297245"/>
    <lineage>
        <taxon>Bacteria</taxon>
        <taxon>Pseudomonadati</taxon>
        <taxon>Pseudomonadota</taxon>
        <taxon>Gammaproteobacteria</taxon>
        <taxon>Legionellales</taxon>
        <taxon>Legionellaceae</taxon>
        <taxon>Legionella</taxon>
    </lineage>
</organism>
<accession>Q5WVT2</accession>
<protein>
    <recommendedName>
        <fullName evidence="1">Outer-membrane lipoprotein carrier protein</fullName>
    </recommendedName>
</protein>
<reference key="1">
    <citation type="journal article" date="2004" name="Nat. Genet.">
        <title>Evidence in the Legionella pneumophila genome for exploitation of host cell functions and high genome plasticity.</title>
        <authorList>
            <person name="Cazalet C."/>
            <person name="Rusniok C."/>
            <person name="Brueggemann H."/>
            <person name="Zidane N."/>
            <person name="Magnier A."/>
            <person name="Ma L."/>
            <person name="Tichit M."/>
            <person name="Jarraud S."/>
            <person name="Bouchier C."/>
            <person name="Vandenesch F."/>
            <person name="Kunst F."/>
            <person name="Etienne J."/>
            <person name="Glaser P."/>
            <person name="Buchrieser C."/>
        </authorList>
    </citation>
    <scope>NUCLEOTIDE SEQUENCE [LARGE SCALE GENOMIC DNA]</scope>
    <source>
        <strain>Lens</strain>
    </source>
</reference>
<comment type="function">
    <text evidence="1">Participates in the translocation of lipoproteins from the inner membrane to the outer membrane. Only forms a complex with a lipoprotein if the residue after the N-terminal Cys is not an aspartate (The Asp acts as a targeting signal to indicate that the lipoprotein should stay in the inner membrane).</text>
</comment>
<comment type="subunit">
    <text evidence="1">Monomer.</text>
</comment>
<comment type="subcellular location">
    <subcellularLocation>
        <location evidence="1">Periplasm</location>
    </subcellularLocation>
</comment>
<comment type="similarity">
    <text evidence="1">Belongs to the LolA family.</text>
</comment>
<sequence>MNRLFLILLLIFSHEVFSQTSAEVLQSKLNAIQTMTANFSQIVKAKNREVSRSSGSMALQRPGRFRWQTKDPLEQLIVADGQKMWIYDVDLEQVTVKNQEKGLGGTAALFLSGYDETLTHDFDVSEKQKGKLTVFDLKSKSAKENFQRIKLIFSQSTLIGLELYDQLGQITDVKLVQIKSNPKLPAKLFQFNPPKGVDVVKQ</sequence>
<keyword id="KW-0143">Chaperone</keyword>
<keyword id="KW-0574">Periplasm</keyword>
<keyword id="KW-0653">Protein transport</keyword>
<keyword id="KW-0732">Signal</keyword>
<keyword id="KW-0813">Transport</keyword>